<proteinExistence type="inferred from homology"/>
<comment type="function">
    <text evidence="1">Putative tyrosine recombinase. Not involved in the cutting and rejoining of the recombining DNA molecules on dif(SL) site.</text>
</comment>
<comment type="subcellular location">
    <subcellularLocation>
        <location evidence="1">Cytoplasm</location>
    </subcellularLocation>
</comment>
<comment type="similarity">
    <text evidence="1">Belongs to the 'phage' integrase family. XerD-like subfamily.</text>
</comment>
<keyword id="KW-0963">Cytoplasm</keyword>
<keyword id="KW-0229">DNA integration</keyword>
<keyword id="KW-0233">DNA recombination</keyword>
<keyword id="KW-0238">DNA-binding</keyword>
<dbReference type="EMBL" id="CP000262">
    <property type="protein sequence ID" value="ABF37251.1"/>
    <property type="molecule type" value="Genomic_DNA"/>
</dbReference>
<dbReference type="SMR" id="Q1J8B0"/>
<dbReference type="KEGG" id="spi:MGAS10750_Spy0301"/>
<dbReference type="HOGENOM" id="CLU_1128554_0_0_9"/>
<dbReference type="Proteomes" id="UP000002434">
    <property type="component" value="Chromosome"/>
</dbReference>
<dbReference type="GO" id="GO:0005737">
    <property type="term" value="C:cytoplasm"/>
    <property type="evidence" value="ECO:0007669"/>
    <property type="project" value="UniProtKB-SubCell"/>
</dbReference>
<dbReference type="GO" id="GO:0003677">
    <property type="term" value="F:DNA binding"/>
    <property type="evidence" value="ECO:0007669"/>
    <property type="project" value="UniProtKB-KW"/>
</dbReference>
<dbReference type="GO" id="GO:0009037">
    <property type="term" value="F:tyrosine-based site-specific recombinase activity"/>
    <property type="evidence" value="ECO:0007669"/>
    <property type="project" value="UniProtKB-UniRule"/>
</dbReference>
<dbReference type="GO" id="GO:0006313">
    <property type="term" value="P:DNA transposition"/>
    <property type="evidence" value="ECO:0007669"/>
    <property type="project" value="UniProtKB-UniRule"/>
</dbReference>
<dbReference type="CDD" id="cd01190">
    <property type="entry name" value="INT_StrepXerD_C_like"/>
    <property type="match status" value="1"/>
</dbReference>
<dbReference type="Gene3D" id="1.10.150.130">
    <property type="match status" value="1"/>
</dbReference>
<dbReference type="Gene3D" id="1.10.443.10">
    <property type="entry name" value="Intergrase catalytic core"/>
    <property type="match status" value="1"/>
</dbReference>
<dbReference type="HAMAP" id="MF_01817">
    <property type="entry name" value="Recomb_XerD_like"/>
    <property type="match status" value="1"/>
</dbReference>
<dbReference type="InterPro" id="IPR044068">
    <property type="entry name" value="CB"/>
</dbReference>
<dbReference type="InterPro" id="IPR011010">
    <property type="entry name" value="DNA_brk_join_enz"/>
</dbReference>
<dbReference type="InterPro" id="IPR013762">
    <property type="entry name" value="Integrase-like_cat_sf"/>
</dbReference>
<dbReference type="InterPro" id="IPR002104">
    <property type="entry name" value="Integrase_catalytic"/>
</dbReference>
<dbReference type="InterPro" id="IPR010998">
    <property type="entry name" value="Integrase_recombinase_N"/>
</dbReference>
<dbReference type="InterPro" id="IPR020876">
    <property type="entry name" value="Tyrosine_recombinase_XerD-like"/>
</dbReference>
<dbReference type="NCBIfam" id="NF002685">
    <property type="entry name" value="PRK02436.1"/>
    <property type="match status" value="1"/>
</dbReference>
<dbReference type="Pfam" id="PF00589">
    <property type="entry name" value="Phage_integrase"/>
    <property type="match status" value="1"/>
</dbReference>
<dbReference type="SUPFAM" id="SSF56349">
    <property type="entry name" value="DNA breaking-rejoining enzymes"/>
    <property type="match status" value="1"/>
</dbReference>
<dbReference type="PROSITE" id="PS51900">
    <property type="entry name" value="CB"/>
    <property type="match status" value="1"/>
</dbReference>
<dbReference type="PROSITE" id="PS51898">
    <property type="entry name" value="TYR_RECOMBINASE"/>
    <property type="match status" value="1"/>
</dbReference>
<organism>
    <name type="scientific">Streptococcus pyogenes serotype M4 (strain MGAS10750)</name>
    <dbReference type="NCBI Taxonomy" id="370554"/>
    <lineage>
        <taxon>Bacteria</taxon>
        <taxon>Bacillati</taxon>
        <taxon>Bacillota</taxon>
        <taxon>Bacilli</taxon>
        <taxon>Lactobacillales</taxon>
        <taxon>Streptococcaceae</taxon>
        <taxon>Streptococcus</taxon>
    </lineage>
</organism>
<gene>
    <name type="ordered locus">MGAS10750_Spy0301</name>
</gene>
<accession>Q1J8B0</accession>
<protein>
    <recommendedName>
        <fullName evidence="1">Tyrosine recombinase XerD-like</fullName>
    </recommendedName>
</protein>
<reference key="1">
    <citation type="journal article" date="2006" name="Proc. Natl. Acad. Sci. U.S.A.">
        <title>Molecular genetic anatomy of inter- and intraserotype variation in the human bacterial pathogen group A Streptococcus.</title>
        <authorList>
            <person name="Beres S.B."/>
            <person name="Richter E.W."/>
            <person name="Nagiec M.J."/>
            <person name="Sumby P."/>
            <person name="Porcella S.F."/>
            <person name="DeLeo F.R."/>
            <person name="Musser J.M."/>
        </authorList>
    </citation>
    <scope>NUCLEOTIDE SEQUENCE [LARGE SCALE GENOMIC DNA]</scope>
    <source>
        <strain>MGAS10750</strain>
    </source>
</reference>
<sequence>MKSYIEPFIASKALSQNSQKAYRYDLQQFCQLVGERVNQDKLLLYQNSIANLSLSAKKRKLSTANQFLYYLYQIKYLNSYFRLTDTMKVMRTEKQQAAIINTDIFYQKTPFVWGQLISLLILELGLTPSEVAGIEVANLDLNFQMLTLKTKKGVRVLPLSQILIPFLEQQLIGKEVYLFEHRGIPFSRQWFFNHLKTFVRSIGYEGLTAQKLREQFILKEKLAGKSIIELSDILGLKSPVTLEKYYKS</sequence>
<evidence type="ECO:0000255" key="1">
    <source>
        <dbReference type="HAMAP-Rule" id="MF_01817"/>
    </source>
</evidence>
<evidence type="ECO:0000255" key="2">
    <source>
        <dbReference type="PROSITE-ProRule" id="PRU01246"/>
    </source>
</evidence>
<evidence type="ECO:0000255" key="3">
    <source>
        <dbReference type="PROSITE-ProRule" id="PRU01248"/>
    </source>
</evidence>
<feature type="chain" id="PRO_1000070258" description="Tyrosine recombinase XerD-like">
    <location>
        <begin position="1"/>
        <end position="248"/>
    </location>
</feature>
<feature type="domain" description="Core-binding (CB)" evidence="3">
    <location>
        <begin position="1"/>
        <end position="72"/>
    </location>
</feature>
<feature type="domain" description="Tyr recombinase" evidence="2">
    <location>
        <begin position="85"/>
        <end position="248"/>
    </location>
</feature>
<feature type="active site" evidence="2">
    <location>
        <position position="149"/>
    </location>
</feature>
<feature type="active site" evidence="2">
    <location>
        <position position="213"/>
    </location>
</feature>
<feature type="active site" description="O-(3'-phospho-DNA)-tyrosine intermediate" evidence="2">
    <location>
        <position position="245"/>
    </location>
</feature>
<name>XERDL_STRPF</name>